<feature type="chain" id="PRO_1000066285" description="Orotate phosphoribosyltransferase">
    <location>
        <begin position="1"/>
        <end position="187"/>
    </location>
</feature>
<feature type="binding site" evidence="1">
    <location>
        <position position="98"/>
    </location>
    <ligand>
        <name>5-phospho-alpha-D-ribose 1-diphosphate</name>
        <dbReference type="ChEBI" id="CHEBI:58017"/>
        <note>ligand shared between dimeric partners</note>
    </ligand>
</feature>
<feature type="binding site" description="in other chain" evidence="1">
    <location>
        <position position="99"/>
    </location>
    <ligand>
        <name>5-phospho-alpha-D-ribose 1-diphosphate</name>
        <dbReference type="ChEBI" id="CHEBI:58017"/>
        <note>ligand shared between dimeric partners</note>
    </ligand>
</feature>
<feature type="binding site" evidence="1">
    <location>
        <position position="102"/>
    </location>
    <ligand>
        <name>5-phospho-alpha-D-ribose 1-diphosphate</name>
        <dbReference type="ChEBI" id="CHEBI:58017"/>
        <note>ligand shared between dimeric partners</note>
    </ligand>
</feature>
<feature type="binding site" evidence="1">
    <location>
        <position position="104"/>
    </location>
    <ligand>
        <name>5-phospho-alpha-D-ribose 1-diphosphate</name>
        <dbReference type="ChEBI" id="CHEBI:58017"/>
        <note>ligand shared between dimeric partners</note>
    </ligand>
</feature>
<feature type="binding site" description="in other chain" evidence="1">
    <location>
        <begin position="128"/>
        <end position="136"/>
    </location>
    <ligand>
        <name>5-phospho-alpha-D-ribose 1-diphosphate</name>
        <dbReference type="ChEBI" id="CHEBI:58017"/>
        <note>ligand shared between dimeric partners</note>
    </ligand>
</feature>
<feature type="binding site" evidence="1">
    <location>
        <position position="132"/>
    </location>
    <ligand>
        <name>orotate</name>
        <dbReference type="ChEBI" id="CHEBI:30839"/>
    </ligand>
</feature>
<feature type="binding site" evidence="1">
    <location>
        <position position="160"/>
    </location>
    <ligand>
        <name>orotate</name>
        <dbReference type="ChEBI" id="CHEBI:30839"/>
    </ligand>
</feature>
<gene>
    <name evidence="1" type="primary">pyrE</name>
    <name type="ordered locus">RPD_0955</name>
</gene>
<reference key="1">
    <citation type="submission" date="2006-03" db="EMBL/GenBank/DDBJ databases">
        <title>Complete sequence of Rhodopseudomonas palustris BisB5.</title>
        <authorList>
            <consortium name="US DOE Joint Genome Institute"/>
            <person name="Copeland A."/>
            <person name="Lucas S."/>
            <person name="Lapidus A."/>
            <person name="Barry K."/>
            <person name="Detter J.C."/>
            <person name="Glavina del Rio T."/>
            <person name="Hammon N."/>
            <person name="Israni S."/>
            <person name="Dalin E."/>
            <person name="Tice H."/>
            <person name="Pitluck S."/>
            <person name="Chain P."/>
            <person name="Malfatti S."/>
            <person name="Shin M."/>
            <person name="Vergez L."/>
            <person name="Schmutz J."/>
            <person name="Larimer F."/>
            <person name="Land M."/>
            <person name="Hauser L."/>
            <person name="Pelletier D.A."/>
            <person name="Kyrpides N."/>
            <person name="Lykidis A."/>
            <person name="Oda Y."/>
            <person name="Harwood C.S."/>
            <person name="Richardson P."/>
        </authorList>
    </citation>
    <scope>NUCLEOTIDE SEQUENCE [LARGE SCALE GENOMIC DNA]</scope>
    <source>
        <strain>BisB5</strain>
    </source>
</reference>
<protein>
    <recommendedName>
        <fullName evidence="1">Orotate phosphoribosyltransferase</fullName>
        <shortName evidence="1">OPRT</shortName>
        <shortName evidence="1">OPRTase</shortName>
        <ecNumber evidence="1">2.4.2.10</ecNumber>
    </recommendedName>
</protein>
<sequence>MSKSASRARLADIIRNRSFGRGEITLASGRKSDFYFNLKPTMLDPEGAALLAELTYEALRDEQVDFIGGLEMGAVPLAGAIAQLSWLKNHPIAAFFVRKKPKEHGAKLAIEGLAKGESLAGKRCVIVEDVTTTGGSAIKAVEAVRESGAEIVLVLTMVDREEGATEAFAEAGLPFRSLYKASEFLNR</sequence>
<dbReference type="EC" id="2.4.2.10" evidence="1"/>
<dbReference type="EMBL" id="CP000283">
    <property type="protein sequence ID" value="ABE38193.1"/>
    <property type="molecule type" value="Genomic_DNA"/>
</dbReference>
<dbReference type="SMR" id="Q13CJ6"/>
<dbReference type="STRING" id="316057.RPD_0955"/>
<dbReference type="KEGG" id="rpd:RPD_0955"/>
<dbReference type="eggNOG" id="COG0461">
    <property type="taxonomic scope" value="Bacteria"/>
</dbReference>
<dbReference type="HOGENOM" id="CLU_074878_2_1_5"/>
<dbReference type="BioCyc" id="RPAL316057:RPD_RS04850-MONOMER"/>
<dbReference type="UniPathway" id="UPA00070">
    <property type="reaction ID" value="UER00119"/>
</dbReference>
<dbReference type="Proteomes" id="UP000001818">
    <property type="component" value="Chromosome"/>
</dbReference>
<dbReference type="GO" id="GO:0000287">
    <property type="term" value="F:magnesium ion binding"/>
    <property type="evidence" value="ECO:0007669"/>
    <property type="project" value="UniProtKB-UniRule"/>
</dbReference>
<dbReference type="GO" id="GO:0004588">
    <property type="term" value="F:orotate phosphoribosyltransferase activity"/>
    <property type="evidence" value="ECO:0007669"/>
    <property type="project" value="UniProtKB-UniRule"/>
</dbReference>
<dbReference type="GO" id="GO:0044205">
    <property type="term" value="P:'de novo' UMP biosynthetic process"/>
    <property type="evidence" value="ECO:0007669"/>
    <property type="project" value="UniProtKB-UniRule"/>
</dbReference>
<dbReference type="GO" id="GO:0019856">
    <property type="term" value="P:pyrimidine nucleobase biosynthetic process"/>
    <property type="evidence" value="ECO:0007669"/>
    <property type="project" value="TreeGrafter"/>
</dbReference>
<dbReference type="CDD" id="cd06223">
    <property type="entry name" value="PRTases_typeI"/>
    <property type="match status" value="1"/>
</dbReference>
<dbReference type="FunFam" id="3.40.50.2020:FF:000029">
    <property type="entry name" value="Orotate phosphoribosyltransferase"/>
    <property type="match status" value="1"/>
</dbReference>
<dbReference type="Gene3D" id="3.40.50.2020">
    <property type="match status" value="1"/>
</dbReference>
<dbReference type="HAMAP" id="MF_01208">
    <property type="entry name" value="PyrE"/>
    <property type="match status" value="1"/>
</dbReference>
<dbReference type="InterPro" id="IPR023031">
    <property type="entry name" value="OPRT"/>
</dbReference>
<dbReference type="InterPro" id="IPR004467">
    <property type="entry name" value="Or_phspho_trans_dom"/>
</dbReference>
<dbReference type="InterPro" id="IPR000836">
    <property type="entry name" value="PRibTrfase_dom"/>
</dbReference>
<dbReference type="InterPro" id="IPR029057">
    <property type="entry name" value="PRTase-like"/>
</dbReference>
<dbReference type="NCBIfam" id="TIGR00336">
    <property type="entry name" value="pyrE"/>
    <property type="match status" value="1"/>
</dbReference>
<dbReference type="PANTHER" id="PTHR19278">
    <property type="entry name" value="OROTATE PHOSPHORIBOSYLTRANSFERASE"/>
    <property type="match status" value="1"/>
</dbReference>
<dbReference type="PANTHER" id="PTHR19278:SF9">
    <property type="entry name" value="URIDINE 5'-MONOPHOSPHATE SYNTHASE"/>
    <property type="match status" value="1"/>
</dbReference>
<dbReference type="Pfam" id="PF00156">
    <property type="entry name" value="Pribosyltran"/>
    <property type="match status" value="1"/>
</dbReference>
<dbReference type="SUPFAM" id="SSF53271">
    <property type="entry name" value="PRTase-like"/>
    <property type="match status" value="1"/>
</dbReference>
<comment type="function">
    <text evidence="1">Catalyzes the transfer of a ribosyl phosphate group from 5-phosphoribose 1-diphosphate to orotate, leading to the formation of orotidine monophosphate (OMP).</text>
</comment>
<comment type="catalytic activity">
    <reaction evidence="1">
        <text>orotidine 5'-phosphate + diphosphate = orotate + 5-phospho-alpha-D-ribose 1-diphosphate</text>
        <dbReference type="Rhea" id="RHEA:10380"/>
        <dbReference type="ChEBI" id="CHEBI:30839"/>
        <dbReference type="ChEBI" id="CHEBI:33019"/>
        <dbReference type="ChEBI" id="CHEBI:57538"/>
        <dbReference type="ChEBI" id="CHEBI:58017"/>
        <dbReference type="EC" id="2.4.2.10"/>
    </reaction>
</comment>
<comment type="cofactor">
    <cofactor evidence="1">
        <name>Mg(2+)</name>
        <dbReference type="ChEBI" id="CHEBI:18420"/>
    </cofactor>
</comment>
<comment type="pathway">
    <text evidence="1">Pyrimidine metabolism; UMP biosynthesis via de novo pathway; UMP from orotate: step 1/2.</text>
</comment>
<comment type="subunit">
    <text evidence="1">Homodimer.</text>
</comment>
<comment type="similarity">
    <text evidence="1">Belongs to the purine/pyrimidine phosphoribosyltransferase family. PyrE subfamily.</text>
</comment>
<accession>Q13CJ6</accession>
<evidence type="ECO:0000255" key="1">
    <source>
        <dbReference type="HAMAP-Rule" id="MF_01208"/>
    </source>
</evidence>
<keyword id="KW-0328">Glycosyltransferase</keyword>
<keyword id="KW-0460">Magnesium</keyword>
<keyword id="KW-0665">Pyrimidine biosynthesis</keyword>
<keyword id="KW-0808">Transferase</keyword>
<name>PYRE_RHOPS</name>
<organism>
    <name type="scientific">Rhodopseudomonas palustris (strain BisB5)</name>
    <dbReference type="NCBI Taxonomy" id="316057"/>
    <lineage>
        <taxon>Bacteria</taxon>
        <taxon>Pseudomonadati</taxon>
        <taxon>Pseudomonadota</taxon>
        <taxon>Alphaproteobacteria</taxon>
        <taxon>Hyphomicrobiales</taxon>
        <taxon>Nitrobacteraceae</taxon>
        <taxon>Rhodopseudomonas</taxon>
    </lineage>
</organism>
<proteinExistence type="inferred from homology"/>